<sequence>MGVNAVHWFRKGLRLHDNPALRECIQGADTVRCVYILDPWFAGSSNVGINRWRFLLQCLEDLDANLRKLNSRLFVIRGQPADVFPRLFKEWNIAKLSIEYDSEPFGKERDAAIKKLASEAGVEVIVRISHTLYDLDKIIELNGGQPPLTYKRFQTLISRMEPLEMPVETITPEVMKKCTTPVSDDHDEKYGVPSLEELGFDTDGLPSAVWPGGETEALTRLERHLERKAWVANFERPRMNANSLLASPTGLSPYLRFGCLSCRLFYFKLTDLYKKVKKNSSPPLSLYGQLLWREFFYTAATNNPRFDKMEGNPICVQIPWDKNPEALAKWAEGRTGFPWIDAIMTQLRQEGWIHHLARHAVACFLTRGDLWISWEEGMKVFEELLLDADWSVNAGSWMWLSCSSFFQQFFHCYCPVGFGRRTDPNGDYIRRYLPVLRGFPAKYIYDPWNAPESIQKAAKCIIGVNYPKPMVNHAEASRLNIERMKQIYQQLSRYRGLGLLATVPSNPNGNGNGGLMGYSPGESISGCGSTGGAQLGAGDGHSVVQSCALGDSHTGTSGVQQQGYCQASSILHYAHGDNQQSHLLQAGRTALGTGISAGKRPNPEEETQSVGPKVQRQSTN</sequence>
<comment type="function">
    <text evidence="2 3">Transcriptional repressor which forms a core component of the circadian clock. The circadian clock, an internal time-keeping system, regulates various physiological processes through the generation of approximately 24 hour circadian rhythms in gene expression, which are translated into rhythms in metabolism and behavior. It is derived from the Latin roots 'circa' (about) and 'diem' (day) and acts as an important regulator of a wide array of physiological functions including metabolism, sleep, body temperature, blood pressure, endocrine, immune, cardiovascular, and renal function. Consists of two major components: the central clock, residing in the suprachiasmatic nucleus (SCN) of the brain, and the peripheral clocks that are present in nearly every tissue and organ system. Both the central and peripheral clocks can be reset by environmental cues, also known as Zeitgebers (German for 'timegivers'). The predominant Zeitgeber for the central clock is light, which is sensed by retina and signals directly to the SCN. The central clock entrains the peripheral clocks through neuronal and hormonal signals, body temperature and feeding-related cues, aligning all clocks with the external light/dark cycle. Circadian rhythms allow an organism to achieve temporal homeostasis with its environment at the molecular level by regulating gene expression to create a peak of protein expression once every 24 hours to control when a particular physiological process is most active with respect to the solar day. Transcription and translation of core clock components (CLOCK, NPAS2, BMAL1, BMAL2, PER1, PER2, PER3, CRY1 and CRY2) plays a critical role in rhythm generation, whereas delays imposed by post-translational modifications (PTMs) are important for determining the period (tau) of the rhythms (tau refers to the period of a rhythm and is the length, in time, of one complete cycle). A diurnal rhythm is synchronized with the day/night cycle, while the ultradian and infradian rhythms have a period shorter and longer than 24 hours, respectively. Disruptions in the circadian rhythms contribute to the pathology of cardiovascular diseases, cancer, metabolic syndromes and aging. A transcription/translation feedback loop (TTFL) forms the core of the molecular circadian clock mechanism. Transcription factors, CLOCK or NPAS2 and BMAL1 or BMAL2, form the positive limb of the feedback loop, act in the form of a heterodimer and activate the transcription of core clock genes and clock-controlled genes (involved in key metabolic processes), harboring E-box elements (5'-CACGTG-3') within their promoters. The core clock genes: PER1/2/3 and CRY1/2 which are transcriptional repressors form the negative limb of the feedback loop and interact with the CLOCK|NPAS2-BMAL1|BMAL2 heterodimer inhibiting its activity and thereby negatively regulating their own expression. This heterodimer also activates nuclear receptors NR1D1, NR1D2, RORA, RORB and RORG, which form a second feedback loop and which activate and repress BMAL1 transcription, respectively. CRY1 and CRY2 have redundant functions but also differential and selective contributions at least in defining the pace of the SCN circadian clock and its circadian transcriptional outputs. More potent transcriptional repressor in cerebellum and liver than CRY2, though more effective in lengthening the period of the SCN oscillator. On its side, CRY2 seems to play a critical role in tuning SCN circadian period by opposing the action of CRY1. With CRY2, is dispensable for circadian rhythm generation but necessary for the development of intercellular networks for rhythm synchrony. Capable of translocating circadian clock core proteins such as PER proteins to the nucleus. Interacts with CLOCK:BMAL1 independently of PER proteins and is found at CLOCK:BMAL1-bound sites, suggesting that CRY may act as a molecular gatekeeper to maintain CLOCK:BMAL1 in a poised and repressed state until the proper time for transcriptional activation.</text>
</comment>
<comment type="cofactor">
    <cofactor evidence="2">
        <name>FAD</name>
        <dbReference type="ChEBI" id="CHEBI:57692"/>
    </cofactor>
    <text evidence="2">Binds 1 FAD per subunit. Only a minority of the protein molecules contain bound FAD. Contrary to the situation in photolyases, the FAD is bound in a shallow, surface-exposed pocket.</text>
</comment>
<comment type="cofactor">
    <cofactor evidence="1">
        <name>(6R)-5,10-methylene-5,6,7,8-tetrahydrofolate</name>
        <dbReference type="ChEBI" id="CHEBI:15636"/>
    </cofactor>
    <text evidence="1">Binds 1 5,10-methenyltetrahydrofolate (MTHF) non-covalently per subunit.</text>
</comment>
<comment type="subunit">
    <text evidence="2">Component of the circadian core oscillator, which includes the CRY proteins, CLOCK or NPAS2, BMAL1 or BMAL2, CSNK1E, and the PER proteins.</text>
</comment>
<comment type="subcellular location">
    <subcellularLocation>
        <location evidence="5">Cytoplasm</location>
    </subcellularLocation>
    <subcellularLocation>
        <location evidence="2">Nucleus</location>
    </subcellularLocation>
    <text evidence="2">Translocated to the nucleus through interaction with other Clock proteins such as PER2 or BMAL1.</text>
</comment>
<comment type="tissue specificity">
    <text evidence="5">Expressed in the retina. High levels found in ganglion cells of the retina.</text>
</comment>
<comment type="induction">
    <text>Up-regulated by light. Higher levels in light/dark cycle than in total darkness.</text>
</comment>
<comment type="similarity">
    <text evidence="6">Belongs to the DNA photolyase class-1 family.</text>
</comment>
<protein>
    <recommendedName>
        <fullName>Cryptochrome-1</fullName>
    </recommendedName>
</protein>
<keyword id="KW-0090">Biological rhythms</keyword>
<keyword id="KW-0157">Chromophore</keyword>
<keyword id="KW-0963">Cytoplasm</keyword>
<keyword id="KW-0274">FAD</keyword>
<keyword id="KW-0285">Flavoprotein</keyword>
<keyword id="KW-0547">Nucleotide-binding</keyword>
<keyword id="KW-0539">Nucleus</keyword>
<keyword id="KW-0600">Photoreceptor protein</keyword>
<keyword id="KW-0675">Receptor</keyword>
<keyword id="KW-0678">Repressor</keyword>
<keyword id="KW-0716">Sensory transduction</keyword>
<keyword id="KW-0804">Transcription</keyword>
<keyword id="KW-0805">Transcription regulation</keyword>
<gene>
    <name type="primary">CRY1</name>
</gene>
<accession>Q6ZZY0</accession>
<evidence type="ECO:0000250" key="1"/>
<evidence type="ECO:0000250" key="2">
    <source>
        <dbReference type="UniProtKB" id="P97784"/>
    </source>
</evidence>
<evidence type="ECO:0000250" key="3">
    <source>
        <dbReference type="UniProtKB" id="Q16526"/>
    </source>
</evidence>
<evidence type="ECO:0000256" key="4">
    <source>
        <dbReference type="SAM" id="MobiDB-lite"/>
    </source>
</evidence>
<evidence type="ECO:0000269" key="5">
    <source>
    </source>
</evidence>
<evidence type="ECO:0000305" key="6"/>
<proteinExistence type="evidence at transcript level"/>
<feature type="chain" id="PRO_0000261147" description="Cryptochrome-1">
    <location>
        <begin position="1"/>
        <end position="620"/>
    </location>
</feature>
<feature type="domain" description="Photolyase/cryptochrome alpha/beta">
    <location>
        <begin position="3"/>
        <end position="132"/>
    </location>
</feature>
<feature type="region of interest" description="Disordered" evidence="4">
    <location>
        <begin position="592"/>
        <end position="620"/>
    </location>
</feature>
<feature type="short sequence motif" description="LIR 1" evidence="2">
    <location>
        <begin position="50"/>
        <end position="54"/>
    </location>
</feature>
<feature type="short sequence motif" description="LIR 2" evidence="2">
    <location>
        <begin position="82"/>
        <end position="87"/>
    </location>
</feature>
<feature type="short sequence motif" description="LIR 3" evidence="2">
    <location>
        <begin position="151"/>
        <end position="156"/>
    </location>
</feature>
<feature type="short sequence motif" description="LIR 4" evidence="2">
    <location>
        <begin position="255"/>
        <end position="260"/>
    </location>
</feature>
<feature type="short sequence motif" description="LIR 5" evidence="2">
    <location>
        <begin position="271"/>
        <end position="276"/>
    </location>
</feature>
<feature type="short sequence motif" description="LIR 6" evidence="2">
    <location>
        <begin position="285"/>
        <end position="290"/>
    </location>
</feature>
<feature type="short sequence motif" description="LIR 7" evidence="2">
    <location>
        <begin position="335"/>
        <end position="339"/>
    </location>
</feature>
<feature type="short sequence motif" description="LIR 8" evidence="2">
    <location>
        <begin position="379"/>
        <end position="384"/>
    </location>
</feature>
<feature type="short sequence motif" description="LIR 9" evidence="2">
    <location>
        <begin position="395"/>
        <end position="400"/>
    </location>
</feature>
<feature type="short sequence motif" description="LIR 10" evidence="2">
    <location>
        <begin position="411"/>
        <end position="416"/>
    </location>
</feature>
<feature type="short sequence motif" description="LIR 11" evidence="2">
    <location>
        <begin position="430"/>
        <end position="435"/>
    </location>
</feature>
<feature type="short sequence motif" description="LIR 12" evidence="2">
    <location>
        <begin position="486"/>
        <end position="491"/>
    </location>
</feature>
<feature type="short sequence motif" description="LIR 13" evidence="2">
    <location>
        <begin position="492"/>
        <end position="497"/>
    </location>
</feature>
<feature type="binding site" evidence="2">
    <location>
        <position position="252"/>
    </location>
    <ligand>
        <name>FAD</name>
        <dbReference type="ChEBI" id="CHEBI:57692"/>
    </ligand>
</feature>
<feature type="binding site" evidence="2">
    <location>
        <position position="289"/>
    </location>
    <ligand>
        <name>FAD</name>
        <dbReference type="ChEBI" id="CHEBI:57692"/>
    </ligand>
</feature>
<feature type="binding site" evidence="2">
    <location>
        <position position="355"/>
    </location>
    <ligand>
        <name>FAD</name>
        <dbReference type="ChEBI" id="CHEBI:57692"/>
    </ligand>
</feature>
<feature type="binding site" evidence="2">
    <location>
        <begin position="387"/>
        <end position="389"/>
    </location>
    <ligand>
        <name>FAD</name>
        <dbReference type="ChEBI" id="CHEBI:57692"/>
    </ligand>
</feature>
<name>CRY1_SYLBO</name>
<organism>
    <name type="scientific">Sylvia borin</name>
    <name type="common">Garden warbler</name>
    <dbReference type="NCBI Taxonomy" id="73324"/>
    <lineage>
        <taxon>Eukaryota</taxon>
        <taxon>Metazoa</taxon>
        <taxon>Chordata</taxon>
        <taxon>Craniata</taxon>
        <taxon>Vertebrata</taxon>
        <taxon>Euteleostomi</taxon>
        <taxon>Archelosauria</taxon>
        <taxon>Archosauria</taxon>
        <taxon>Dinosauria</taxon>
        <taxon>Saurischia</taxon>
        <taxon>Theropoda</taxon>
        <taxon>Coelurosauria</taxon>
        <taxon>Aves</taxon>
        <taxon>Neognathae</taxon>
        <taxon>Neoaves</taxon>
        <taxon>Telluraves</taxon>
        <taxon>Australaves</taxon>
        <taxon>Passeriformes</taxon>
        <taxon>Sylvioidea</taxon>
        <taxon>Sylviidae</taxon>
        <taxon>Sylviinae</taxon>
        <taxon>Sylvia</taxon>
    </lineage>
</organism>
<reference key="1">
    <citation type="journal article" date="2004" name="Proc. Natl. Acad. Sci. U.S.A.">
        <title>Cryptochromes and neuronal-activity markers colocalize in the retina of migratory birds during magnetic orientation.</title>
        <authorList>
            <person name="Mouritsen H."/>
            <person name="Janssen-Bienhold U."/>
            <person name="Liedvogel M."/>
            <person name="Feenders G."/>
            <person name="Stalleicken J."/>
            <person name="Dirks P."/>
            <person name="Weiler R."/>
        </authorList>
    </citation>
    <scope>NUCLEOTIDE SEQUENCE [MRNA]</scope>
    <scope>SUBCELLULAR LOCATION</scope>
    <scope>TISSUE SPECIFICITY</scope>
    <source>
        <tissue>Retina</tissue>
    </source>
</reference>
<dbReference type="EMBL" id="AJ632120">
    <property type="protein sequence ID" value="CAG14931.1"/>
    <property type="molecule type" value="mRNA"/>
</dbReference>
<dbReference type="SMR" id="Q6ZZY0"/>
<dbReference type="GO" id="GO:0005829">
    <property type="term" value="C:cytosol"/>
    <property type="evidence" value="ECO:0000250"/>
    <property type="project" value="AgBase"/>
</dbReference>
<dbReference type="GO" id="GO:0005634">
    <property type="term" value="C:nucleus"/>
    <property type="evidence" value="ECO:0007669"/>
    <property type="project" value="UniProtKB-SubCell"/>
</dbReference>
<dbReference type="GO" id="GO:0097381">
    <property type="term" value="C:photoreceptor disc membrane"/>
    <property type="evidence" value="ECO:0000250"/>
    <property type="project" value="AgBase"/>
</dbReference>
<dbReference type="GO" id="GO:0042622">
    <property type="term" value="C:photoreceptor outer segment membrane"/>
    <property type="evidence" value="ECO:0000250"/>
    <property type="project" value="AgBase"/>
</dbReference>
<dbReference type="GO" id="GO:0003677">
    <property type="term" value="F:DNA binding"/>
    <property type="evidence" value="ECO:0007669"/>
    <property type="project" value="TreeGrafter"/>
</dbReference>
<dbReference type="GO" id="GO:0071949">
    <property type="term" value="F:FAD binding"/>
    <property type="evidence" value="ECO:0007669"/>
    <property type="project" value="TreeGrafter"/>
</dbReference>
<dbReference type="GO" id="GO:0009881">
    <property type="term" value="F:photoreceptor activity"/>
    <property type="evidence" value="ECO:0007669"/>
    <property type="project" value="UniProtKB-KW"/>
</dbReference>
<dbReference type="GO" id="GO:0032922">
    <property type="term" value="P:circadian regulation of gene expression"/>
    <property type="evidence" value="ECO:0007669"/>
    <property type="project" value="TreeGrafter"/>
</dbReference>
<dbReference type="GO" id="GO:0007623">
    <property type="term" value="P:circadian rhythm"/>
    <property type="evidence" value="ECO:0000250"/>
    <property type="project" value="UniProtKB"/>
</dbReference>
<dbReference type="GO" id="GO:0043153">
    <property type="term" value="P:entrainment of circadian clock by photoperiod"/>
    <property type="evidence" value="ECO:0007669"/>
    <property type="project" value="TreeGrafter"/>
</dbReference>
<dbReference type="GO" id="GO:0045892">
    <property type="term" value="P:negative regulation of DNA-templated transcription"/>
    <property type="evidence" value="ECO:0007669"/>
    <property type="project" value="TreeGrafter"/>
</dbReference>
<dbReference type="GO" id="GO:0045721">
    <property type="term" value="P:negative regulation of gluconeogenesis"/>
    <property type="evidence" value="ECO:0000250"/>
    <property type="project" value="UniProtKB"/>
</dbReference>
<dbReference type="GO" id="GO:0009416">
    <property type="term" value="P:response to light stimulus"/>
    <property type="evidence" value="ECO:0000250"/>
    <property type="project" value="UniProtKB"/>
</dbReference>
<dbReference type="FunFam" id="1.10.579.10:FF:000001">
    <property type="entry name" value="Cryptochrome 1"/>
    <property type="match status" value="1"/>
</dbReference>
<dbReference type="FunFam" id="1.25.40.80:FF:000002">
    <property type="entry name" value="cryptochrome-1 isoform X1"/>
    <property type="match status" value="1"/>
</dbReference>
<dbReference type="FunFam" id="1.25.40.80:FF:000003">
    <property type="entry name" value="cryptochrome-1 isoform X1"/>
    <property type="match status" value="1"/>
</dbReference>
<dbReference type="FunFam" id="3.40.50.620:FF:000099">
    <property type="entry name" value="cryptochrome-1 isoform X1"/>
    <property type="match status" value="1"/>
</dbReference>
<dbReference type="Gene3D" id="1.25.40.80">
    <property type="match status" value="2"/>
</dbReference>
<dbReference type="Gene3D" id="1.10.579.10">
    <property type="entry name" value="DNA Cyclobutane Dipyrimidine Photolyase, subunit A, domain 3"/>
    <property type="match status" value="1"/>
</dbReference>
<dbReference type="Gene3D" id="3.40.50.620">
    <property type="entry name" value="HUPs"/>
    <property type="match status" value="1"/>
</dbReference>
<dbReference type="InterPro" id="IPR036134">
    <property type="entry name" value="Crypto/Photolyase_FAD-like_sf"/>
</dbReference>
<dbReference type="InterPro" id="IPR036155">
    <property type="entry name" value="Crypto/Photolyase_N_sf"/>
</dbReference>
<dbReference type="InterPro" id="IPR005101">
    <property type="entry name" value="Cryptochr/Photolyase_FAD-bd"/>
</dbReference>
<dbReference type="InterPro" id="IPR002081">
    <property type="entry name" value="Cryptochrome/DNA_photolyase_1"/>
</dbReference>
<dbReference type="InterPro" id="IPR006050">
    <property type="entry name" value="DNA_photolyase_N"/>
</dbReference>
<dbReference type="InterPro" id="IPR014729">
    <property type="entry name" value="Rossmann-like_a/b/a_fold"/>
</dbReference>
<dbReference type="PANTHER" id="PTHR11455">
    <property type="entry name" value="CRYPTOCHROME"/>
    <property type="match status" value="1"/>
</dbReference>
<dbReference type="PANTHER" id="PTHR11455:SF16">
    <property type="entry name" value="CRYPTOCHROME-1"/>
    <property type="match status" value="1"/>
</dbReference>
<dbReference type="Pfam" id="PF00875">
    <property type="entry name" value="DNA_photolyase"/>
    <property type="match status" value="1"/>
</dbReference>
<dbReference type="Pfam" id="PF03441">
    <property type="entry name" value="FAD_binding_7"/>
    <property type="match status" value="1"/>
</dbReference>
<dbReference type="SUPFAM" id="SSF48173">
    <property type="entry name" value="Cryptochrome/photolyase FAD-binding domain"/>
    <property type="match status" value="1"/>
</dbReference>
<dbReference type="SUPFAM" id="SSF52425">
    <property type="entry name" value="Cryptochrome/photolyase, N-terminal domain"/>
    <property type="match status" value="1"/>
</dbReference>
<dbReference type="PROSITE" id="PS51645">
    <property type="entry name" value="PHR_CRY_ALPHA_BETA"/>
    <property type="match status" value="1"/>
</dbReference>